<accession>Q0T6N5</accession>
<keyword id="KW-0997">Cell inner membrane</keyword>
<keyword id="KW-1003">Cell membrane</keyword>
<keyword id="KW-0407">Ion channel</keyword>
<keyword id="KW-0406">Ion transport</keyword>
<keyword id="KW-0472">Membrane</keyword>
<keyword id="KW-0479">Metal-binding</keyword>
<keyword id="KW-0915">Sodium</keyword>
<keyword id="KW-0812">Transmembrane</keyword>
<keyword id="KW-1133">Transmembrane helix</keyword>
<keyword id="KW-0813">Transport</keyword>
<sequence>MLQLLLAVFIGGGTGSVARWLLSMRFNPLHQAIPLGTLAANLIGAFIIGMGFAWFSRMTNIDPVWKVLITTGFCGGLTTFSTFSAEVVFLLQEGRFGWALLNVFVNLLGSFAMTALAFWLFSASTVH</sequence>
<feature type="chain" id="PRO_1000026423" description="Fluoride-specific ion channel FluC">
    <location>
        <begin position="1"/>
        <end position="127"/>
    </location>
</feature>
<feature type="transmembrane region" description="Helical" evidence="1">
    <location>
        <begin position="4"/>
        <end position="24"/>
    </location>
</feature>
<feature type="transmembrane region" description="Helical" evidence="1">
    <location>
        <begin position="35"/>
        <end position="55"/>
    </location>
</feature>
<feature type="transmembrane region" description="Helical" evidence="1">
    <location>
        <begin position="71"/>
        <end position="91"/>
    </location>
</feature>
<feature type="transmembrane region" description="Helical" evidence="1">
    <location>
        <begin position="103"/>
        <end position="123"/>
    </location>
</feature>
<feature type="binding site" evidence="1">
    <location>
        <position position="75"/>
    </location>
    <ligand>
        <name>Na(+)</name>
        <dbReference type="ChEBI" id="CHEBI:29101"/>
        <note>structural</note>
    </ligand>
</feature>
<feature type="binding site" evidence="1">
    <location>
        <position position="78"/>
    </location>
    <ligand>
        <name>Na(+)</name>
        <dbReference type="ChEBI" id="CHEBI:29101"/>
        <note>structural</note>
    </ligand>
</feature>
<name>FLUC_SHIF8</name>
<proteinExistence type="inferred from homology"/>
<dbReference type="EMBL" id="CP000266">
    <property type="protein sequence ID" value="ABF02941.1"/>
    <property type="molecule type" value="Genomic_DNA"/>
</dbReference>
<dbReference type="RefSeq" id="WP_000939741.1">
    <property type="nucleotide sequence ID" value="NC_008258.1"/>
</dbReference>
<dbReference type="SMR" id="Q0T6N5"/>
<dbReference type="KEGG" id="sfv:SFV_0701"/>
<dbReference type="HOGENOM" id="CLU_114342_3_3_6"/>
<dbReference type="Proteomes" id="UP000000659">
    <property type="component" value="Chromosome"/>
</dbReference>
<dbReference type="GO" id="GO:0005886">
    <property type="term" value="C:plasma membrane"/>
    <property type="evidence" value="ECO:0007669"/>
    <property type="project" value="UniProtKB-SubCell"/>
</dbReference>
<dbReference type="GO" id="GO:0062054">
    <property type="term" value="F:fluoride channel activity"/>
    <property type="evidence" value="ECO:0007669"/>
    <property type="project" value="UniProtKB-UniRule"/>
</dbReference>
<dbReference type="GO" id="GO:0046872">
    <property type="term" value="F:metal ion binding"/>
    <property type="evidence" value="ECO:0007669"/>
    <property type="project" value="UniProtKB-KW"/>
</dbReference>
<dbReference type="GO" id="GO:0140114">
    <property type="term" value="P:cellular detoxification of fluoride"/>
    <property type="evidence" value="ECO:0007669"/>
    <property type="project" value="UniProtKB-UniRule"/>
</dbReference>
<dbReference type="HAMAP" id="MF_00454">
    <property type="entry name" value="FluC"/>
    <property type="match status" value="1"/>
</dbReference>
<dbReference type="InterPro" id="IPR003691">
    <property type="entry name" value="FluC"/>
</dbReference>
<dbReference type="NCBIfam" id="TIGR00494">
    <property type="entry name" value="crcB"/>
    <property type="match status" value="1"/>
</dbReference>
<dbReference type="NCBIfam" id="NF010792">
    <property type="entry name" value="PRK14196.1"/>
    <property type="match status" value="1"/>
</dbReference>
<dbReference type="PANTHER" id="PTHR28259">
    <property type="entry name" value="FLUORIDE EXPORT PROTEIN 1-RELATED"/>
    <property type="match status" value="1"/>
</dbReference>
<dbReference type="PANTHER" id="PTHR28259:SF1">
    <property type="entry name" value="FLUORIDE EXPORT PROTEIN 1-RELATED"/>
    <property type="match status" value="1"/>
</dbReference>
<dbReference type="Pfam" id="PF02537">
    <property type="entry name" value="CRCB"/>
    <property type="match status" value="1"/>
</dbReference>
<reference key="1">
    <citation type="journal article" date="2006" name="BMC Genomics">
        <title>Complete genome sequence of Shigella flexneri 5b and comparison with Shigella flexneri 2a.</title>
        <authorList>
            <person name="Nie H."/>
            <person name="Yang F."/>
            <person name="Zhang X."/>
            <person name="Yang J."/>
            <person name="Chen L."/>
            <person name="Wang J."/>
            <person name="Xiong Z."/>
            <person name="Peng J."/>
            <person name="Sun L."/>
            <person name="Dong J."/>
            <person name="Xue Y."/>
            <person name="Xu X."/>
            <person name="Chen S."/>
            <person name="Yao Z."/>
            <person name="Shen Y."/>
            <person name="Jin Q."/>
        </authorList>
    </citation>
    <scope>NUCLEOTIDE SEQUENCE [LARGE SCALE GENOMIC DNA]</scope>
    <source>
        <strain>8401</strain>
    </source>
</reference>
<comment type="function">
    <text evidence="1">Fluoride-specific ion channel. Important for reducing fluoride concentration in the cell, thus reducing its toxicity.</text>
</comment>
<comment type="catalytic activity">
    <reaction evidence="1">
        <text>fluoride(in) = fluoride(out)</text>
        <dbReference type="Rhea" id="RHEA:76159"/>
        <dbReference type="ChEBI" id="CHEBI:17051"/>
    </reaction>
    <physiologicalReaction direction="left-to-right" evidence="1">
        <dbReference type="Rhea" id="RHEA:76160"/>
    </physiologicalReaction>
</comment>
<comment type="activity regulation">
    <text evidence="1">Na(+) is not transported, but it plays an essential structural role and its presence is essential for fluoride channel function.</text>
</comment>
<comment type="subcellular location">
    <subcellularLocation>
        <location evidence="1">Cell inner membrane</location>
        <topology evidence="1">Multi-pass membrane protein</topology>
    </subcellularLocation>
</comment>
<comment type="similarity">
    <text evidence="1">Belongs to the fluoride channel Fluc/FEX (TC 1.A.43) family.</text>
</comment>
<gene>
    <name evidence="1" type="primary">fluC</name>
    <name evidence="1" type="synonym">crcB</name>
    <name type="ordered locus">SFV_0701</name>
</gene>
<protein>
    <recommendedName>
        <fullName evidence="1">Fluoride-specific ion channel FluC</fullName>
    </recommendedName>
</protein>
<evidence type="ECO:0000255" key="1">
    <source>
        <dbReference type="HAMAP-Rule" id="MF_00454"/>
    </source>
</evidence>
<organism>
    <name type="scientific">Shigella flexneri serotype 5b (strain 8401)</name>
    <dbReference type="NCBI Taxonomy" id="373384"/>
    <lineage>
        <taxon>Bacteria</taxon>
        <taxon>Pseudomonadati</taxon>
        <taxon>Pseudomonadota</taxon>
        <taxon>Gammaproteobacteria</taxon>
        <taxon>Enterobacterales</taxon>
        <taxon>Enterobacteriaceae</taxon>
        <taxon>Shigella</taxon>
    </lineage>
</organism>